<feature type="chain" id="PRO_1000081073" description="Glutamate 5-kinase">
    <location>
        <begin position="1"/>
        <end position="367"/>
    </location>
</feature>
<feature type="domain" description="PUA" evidence="1">
    <location>
        <begin position="279"/>
        <end position="357"/>
    </location>
</feature>
<feature type="binding site" evidence="1">
    <location>
        <position position="17"/>
    </location>
    <ligand>
        <name>ATP</name>
        <dbReference type="ChEBI" id="CHEBI:30616"/>
    </ligand>
</feature>
<feature type="binding site" evidence="1">
    <location>
        <position position="57"/>
    </location>
    <ligand>
        <name>substrate</name>
    </ligand>
</feature>
<feature type="binding site" evidence="1">
    <location>
        <position position="144"/>
    </location>
    <ligand>
        <name>substrate</name>
    </ligand>
</feature>
<feature type="binding site" evidence="1">
    <location>
        <position position="156"/>
    </location>
    <ligand>
        <name>substrate</name>
    </ligand>
</feature>
<feature type="binding site" evidence="1">
    <location>
        <begin position="176"/>
        <end position="177"/>
    </location>
    <ligand>
        <name>ATP</name>
        <dbReference type="ChEBI" id="CHEBI:30616"/>
    </ligand>
</feature>
<feature type="binding site" evidence="1">
    <location>
        <begin position="217"/>
        <end position="223"/>
    </location>
    <ligand>
        <name>ATP</name>
        <dbReference type="ChEBI" id="CHEBI:30616"/>
    </ligand>
</feature>
<protein>
    <recommendedName>
        <fullName evidence="1">Glutamate 5-kinase</fullName>
        <ecNumber evidence="1">2.7.2.11</ecNumber>
    </recommendedName>
    <alternativeName>
        <fullName evidence="1">Gamma-glutamyl kinase</fullName>
        <shortName evidence="1">GK</shortName>
    </alternativeName>
</protein>
<comment type="function">
    <text evidence="1">Catalyzes the transfer of a phosphate group to glutamate to form L-glutamate 5-phosphate.</text>
</comment>
<comment type="catalytic activity">
    <reaction evidence="1">
        <text>L-glutamate + ATP = L-glutamyl 5-phosphate + ADP</text>
        <dbReference type="Rhea" id="RHEA:14877"/>
        <dbReference type="ChEBI" id="CHEBI:29985"/>
        <dbReference type="ChEBI" id="CHEBI:30616"/>
        <dbReference type="ChEBI" id="CHEBI:58274"/>
        <dbReference type="ChEBI" id="CHEBI:456216"/>
        <dbReference type="EC" id="2.7.2.11"/>
    </reaction>
</comment>
<comment type="pathway">
    <text evidence="1">Amino-acid biosynthesis; L-proline biosynthesis; L-glutamate 5-semialdehyde from L-glutamate: step 1/2.</text>
</comment>
<comment type="subcellular location">
    <subcellularLocation>
        <location evidence="1">Cytoplasm</location>
    </subcellularLocation>
</comment>
<comment type="similarity">
    <text evidence="1">Belongs to the glutamate 5-kinase family.</text>
</comment>
<sequence>MTAHRDAIRTARSLVVKVGTNALTTPAGVFDAGRLAGLADAIEARMKAGTDVVIVSSGAIAAGIEPLGLSRRPRDLATKQAAASVGQVALVNSWSAAFARYGRTVGQVLLSAHDISMRAQHTNAQRTLDRLRALHAVAIVNENDTVATNEIRFGDNDRLSALVAHLVGAEALVLLSDIDGLYDSDPRKTKGAKFIPEVTGAEDLAGVVAGPGSDLGTGGMTSKMSSALLAADAGVPVLLAAAADAASALTDASVGTVFAARPVRMSARRFWVRYAAEAAGALTLDEGAVRAVVHQRRSLLPAGITAVSGRFYAGDVVELRGPDAVPVARGVVAYDATELATMMGRSTSELPGELRRPAVHADDLVAV</sequence>
<gene>
    <name evidence="1" type="primary">proB</name>
    <name type="ordered locus">MAV_1732</name>
</gene>
<dbReference type="EC" id="2.7.2.11" evidence="1"/>
<dbReference type="EMBL" id="CP000479">
    <property type="protein sequence ID" value="ABK64739.1"/>
    <property type="molecule type" value="Genomic_DNA"/>
</dbReference>
<dbReference type="RefSeq" id="WP_011724310.1">
    <property type="nucleotide sequence ID" value="NC_008595.1"/>
</dbReference>
<dbReference type="SMR" id="A0QDH1"/>
<dbReference type="KEGG" id="mav:MAV_1732"/>
<dbReference type="HOGENOM" id="CLU_025400_2_0_11"/>
<dbReference type="UniPathway" id="UPA00098">
    <property type="reaction ID" value="UER00359"/>
</dbReference>
<dbReference type="Proteomes" id="UP000001574">
    <property type="component" value="Chromosome"/>
</dbReference>
<dbReference type="GO" id="GO:0005829">
    <property type="term" value="C:cytosol"/>
    <property type="evidence" value="ECO:0007669"/>
    <property type="project" value="TreeGrafter"/>
</dbReference>
<dbReference type="GO" id="GO:0005524">
    <property type="term" value="F:ATP binding"/>
    <property type="evidence" value="ECO:0007669"/>
    <property type="project" value="UniProtKB-KW"/>
</dbReference>
<dbReference type="GO" id="GO:0004349">
    <property type="term" value="F:glutamate 5-kinase activity"/>
    <property type="evidence" value="ECO:0007669"/>
    <property type="project" value="UniProtKB-UniRule"/>
</dbReference>
<dbReference type="GO" id="GO:0003723">
    <property type="term" value="F:RNA binding"/>
    <property type="evidence" value="ECO:0007669"/>
    <property type="project" value="InterPro"/>
</dbReference>
<dbReference type="GO" id="GO:0055129">
    <property type="term" value="P:L-proline biosynthetic process"/>
    <property type="evidence" value="ECO:0007669"/>
    <property type="project" value="UniProtKB-UniRule"/>
</dbReference>
<dbReference type="CDD" id="cd04242">
    <property type="entry name" value="AAK_G5K_ProB"/>
    <property type="match status" value="1"/>
</dbReference>
<dbReference type="CDD" id="cd21157">
    <property type="entry name" value="PUA_G5K"/>
    <property type="match status" value="1"/>
</dbReference>
<dbReference type="FunFam" id="3.40.1160.10:FF:000018">
    <property type="entry name" value="Glutamate 5-kinase"/>
    <property type="match status" value="1"/>
</dbReference>
<dbReference type="Gene3D" id="3.40.1160.10">
    <property type="entry name" value="Acetylglutamate kinase-like"/>
    <property type="match status" value="1"/>
</dbReference>
<dbReference type="Gene3D" id="2.30.130.10">
    <property type="entry name" value="PUA domain"/>
    <property type="match status" value="1"/>
</dbReference>
<dbReference type="HAMAP" id="MF_00456">
    <property type="entry name" value="ProB"/>
    <property type="match status" value="1"/>
</dbReference>
<dbReference type="InterPro" id="IPR036393">
    <property type="entry name" value="AceGlu_kinase-like_sf"/>
</dbReference>
<dbReference type="InterPro" id="IPR001048">
    <property type="entry name" value="Asp/Glu/Uridylate_kinase"/>
</dbReference>
<dbReference type="InterPro" id="IPR041739">
    <property type="entry name" value="G5K_ProB"/>
</dbReference>
<dbReference type="InterPro" id="IPR001057">
    <property type="entry name" value="Glu/AcGlu_kinase"/>
</dbReference>
<dbReference type="InterPro" id="IPR011529">
    <property type="entry name" value="Glu_5kinase"/>
</dbReference>
<dbReference type="InterPro" id="IPR005715">
    <property type="entry name" value="Glu_5kinase/COase_Synthase"/>
</dbReference>
<dbReference type="InterPro" id="IPR019797">
    <property type="entry name" value="Glutamate_5-kinase_CS"/>
</dbReference>
<dbReference type="InterPro" id="IPR002478">
    <property type="entry name" value="PUA"/>
</dbReference>
<dbReference type="InterPro" id="IPR015947">
    <property type="entry name" value="PUA-like_sf"/>
</dbReference>
<dbReference type="InterPro" id="IPR036974">
    <property type="entry name" value="PUA_sf"/>
</dbReference>
<dbReference type="NCBIfam" id="TIGR01027">
    <property type="entry name" value="proB"/>
    <property type="match status" value="1"/>
</dbReference>
<dbReference type="PANTHER" id="PTHR43654">
    <property type="entry name" value="GLUTAMATE 5-KINASE"/>
    <property type="match status" value="1"/>
</dbReference>
<dbReference type="PANTHER" id="PTHR43654:SF1">
    <property type="entry name" value="ISOPENTENYL PHOSPHATE KINASE"/>
    <property type="match status" value="1"/>
</dbReference>
<dbReference type="Pfam" id="PF00696">
    <property type="entry name" value="AA_kinase"/>
    <property type="match status" value="1"/>
</dbReference>
<dbReference type="Pfam" id="PF01472">
    <property type="entry name" value="PUA"/>
    <property type="match status" value="1"/>
</dbReference>
<dbReference type="PIRSF" id="PIRSF000729">
    <property type="entry name" value="GK"/>
    <property type="match status" value="1"/>
</dbReference>
<dbReference type="PRINTS" id="PR00474">
    <property type="entry name" value="GLU5KINASE"/>
</dbReference>
<dbReference type="SMART" id="SM00359">
    <property type="entry name" value="PUA"/>
    <property type="match status" value="1"/>
</dbReference>
<dbReference type="SUPFAM" id="SSF53633">
    <property type="entry name" value="Carbamate kinase-like"/>
    <property type="match status" value="1"/>
</dbReference>
<dbReference type="SUPFAM" id="SSF88697">
    <property type="entry name" value="PUA domain-like"/>
    <property type="match status" value="1"/>
</dbReference>
<dbReference type="PROSITE" id="PS00902">
    <property type="entry name" value="GLUTAMATE_5_KINASE"/>
    <property type="match status" value="1"/>
</dbReference>
<dbReference type="PROSITE" id="PS50890">
    <property type="entry name" value="PUA"/>
    <property type="match status" value="1"/>
</dbReference>
<accession>A0QDH1</accession>
<organism>
    <name type="scientific">Mycobacterium avium (strain 104)</name>
    <dbReference type="NCBI Taxonomy" id="243243"/>
    <lineage>
        <taxon>Bacteria</taxon>
        <taxon>Bacillati</taxon>
        <taxon>Actinomycetota</taxon>
        <taxon>Actinomycetes</taxon>
        <taxon>Mycobacteriales</taxon>
        <taxon>Mycobacteriaceae</taxon>
        <taxon>Mycobacterium</taxon>
        <taxon>Mycobacterium avium complex (MAC)</taxon>
    </lineage>
</organism>
<keyword id="KW-0028">Amino-acid biosynthesis</keyword>
<keyword id="KW-0067">ATP-binding</keyword>
<keyword id="KW-0963">Cytoplasm</keyword>
<keyword id="KW-0418">Kinase</keyword>
<keyword id="KW-0547">Nucleotide-binding</keyword>
<keyword id="KW-0641">Proline biosynthesis</keyword>
<keyword id="KW-0808">Transferase</keyword>
<reference key="1">
    <citation type="submission" date="2006-10" db="EMBL/GenBank/DDBJ databases">
        <authorList>
            <person name="Fleischmann R.D."/>
            <person name="Dodson R.J."/>
            <person name="Haft D.H."/>
            <person name="Merkel J.S."/>
            <person name="Nelson W.C."/>
            <person name="Fraser C.M."/>
        </authorList>
    </citation>
    <scope>NUCLEOTIDE SEQUENCE [LARGE SCALE GENOMIC DNA]</scope>
    <source>
        <strain>104</strain>
    </source>
</reference>
<name>PROB_MYCA1</name>
<evidence type="ECO:0000255" key="1">
    <source>
        <dbReference type="HAMAP-Rule" id="MF_00456"/>
    </source>
</evidence>
<proteinExistence type="inferred from homology"/>